<sequence>MTGPSTGPALVVGLGNPGSEYERTRHNVGFLVADVLAERVGDRFAVHKKSGADLLQARLDGRQVLIAKPRSYMNLSGRPVAALARFFSVPPTEVIVVHDELDLPFGAVRLKRGGGEGGHNGLRSISSALTTKDYLRTRIGIGRPPGRQDPADFVLKPFAAAERKEVPVIVEQAADAVELLLRVGLEAAQNQLH</sequence>
<protein>
    <recommendedName>
        <fullName evidence="1">Peptidyl-tRNA hydrolase</fullName>
        <shortName evidence="1">Pth</shortName>
        <ecNumber evidence="1">3.1.1.29</ecNumber>
    </recommendedName>
</protein>
<feature type="chain" id="PRO_0000187785" description="Peptidyl-tRNA hydrolase">
    <location>
        <begin position="1"/>
        <end position="193"/>
    </location>
</feature>
<feature type="active site" description="Proton acceptor" evidence="1">
    <location>
        <position position="26"/>
    </location>
</feature>
<feature type="binding site" evidence="1">
    <location>
        <position position="21"/>
    </location>
    <ligand>
        <name>tRNA</name>
        <dbReference type="ChEBI" id="CHEBI:17843"/>
    </ligand>
</feature>
<feature type="binding site" evidence="1">
    <location>
        <position position="72"/>
    </location>
    <ligand>
        <name>tRNA</name>
        <dbReference type="ChEBI" id="CHEBI:17843"/>
    </ligand>
</feature>
<feature type="binding site" evidence="1">
    <location>
        <position position="74"/>
    </location>
    <ligand>
        <name>tRNA</name>
        <dbReference type="ChEBI" id="CHEBI:17843"/>
    </ligand>
</feature>
<feature type="binding site" evidence="1">
    <location>
        <position position="120"/>
    </location>
    <ligand>
        <name>tRNA</name>
        <dbReference type="ChEBI" id="CHEBI:17843"/>
    </ligand>
</feature>
<feature type="site" description="Discriminates between blocked and unblocked aminoacyl-tRNA" evidence="1">
    <location>
        <position position="16"/>
    </location>
</feature>
<feature type="site" description="Stabilizes the basic form of H active site to accept a proton" evidence="1">
    <location>
        <position position="99"/>
    </location>
</feature>
<organism>
    <name type="scientific">Nocardia farcinica (strain IFM 10152)</name>
    <dbReference type="NCBI Taxonomy" id="247156"/>
    <lineage>
        <taxon>Bacteria</taxon>
        <taxon>Bacillati</taxon>
        <taxon>Actinomycetota</taxon>
        <taxon>Actinomycetes</taxon>
        <taxon>Mycobacteriales</taxon>
        <taxon>Nocardiaceae</taxon>
        <taxon>Nocardia</taxon>
    </lineage>
</organism>
<dbReference type="EC" id="3.1.1.29" evidence="1"/>
<dbReference type="EMBL" id="AP006618">
    <property type="protein sequence ID" value="BAD59745.1"/>
    <property type="molecule type" value="Genomic_DNA"/>
</dbReference>
<dbReference type="RefSeq" id="WP_011211428.1">
    <property type="nucleotide sequence ID" value="NC_006361.1"/>
</dbReference>
<dbReference type="SMR" id="Q5YPZ6"/>
<dbReference type="STRING" id="247156.NFA_48930"/>
<dbReference type="GeneID" id="61135488"/>
<dbReference type="KEGG" id="nfa:NFA_48930"/>
<dbReference type="eggNOG" id="COG0193">
    <property type="taxonomic scope" value="Bacteria"/>
</dbReference>
<dbReference type="HOGENOM" id="CLU_062456_2_2_11"/>
<dbReference type="OrthoDB" id="9800507at2"/>
<dbReference type="Proteomes" id="UP000006820">
    <property type="component" value="Chromosome"/>
</dbReference>
<dbReference type="GO" id="GO:0005737">
    <property type="term" value="C:cytoplasm"/>
    <property type="evidence" value="ECO:0007669"/>
    <property type="project" value="UniProtKB-SubCell"/>
</dbReference>
<dbReference type="GO" id="GO:0004045">
    <property type="term" value="F:peptidyl-tRNA hydrolase activity"/>
    <property type="evidence" value="ECO:0007669"/>
    <property type="project" value="UniProtKB-UniRule"/>
</dbReference>
<dbReference type="GO" id="GO:0000049">
    <property type="term" value="F:tRNA binding"/>
    <property type="evidence" value="ECO:0007669"/>
    <property type="project" value="UniProtKB-UniRule"/>
</dbReference>
<dbReference type="GO" id="GO:0006515">
    <property type="term" value="P:protein quality control for misfolded or incompletely synthesized proteins"/>
    <property type="evidence" value="ECO:0007669"/>
    <property type="project" value="UniProtKB-UniRule"/>
</dbReference>
<dbReference type="GO" id="GO:0072344">
    <property type="term" value="P:rescue of stalled ribosome"/>
    <property type="evidence" value="ECO:0007669"/>
    <property type="project" value="UniProtKB-UniRule"/>
</dbReference>
<dbReference type="CDD" id="cd00462">
    <property type="entry name" value="PTH"/>
    <property type="match status" value="1"/>
</dbReference>
<dbReference type="FunFam" id="3.40.50.1470:FF:000001">
    <property type="entry name" value="Peptidyl-tRNA hydrolase"/>
    <property type="match status" value="1"/>
</dbReference>
<dbReference type="Gene3D" id="3.40.50.1470">
    <property type="entry name" value="Peptidyl-tRNA hydrolase"/>
    <property type="match status" value="1"/>
</dbReference>
<dbReference type="HAMAP" id="MF_00083">
    <property type="entry name" value="Pept_tRNA_hydro_bact"/>
    <property type="match status" value="1"/>
</dbReference>
<dbReference type="InterPro" id="IPR001328">
    <property type="entry name" value="Pept_tRNA_hydro"/>
</dbReference>
<dbReference type="InterPro" id="IPR018171">
    <property type="entry name" value="Pept_tRNA_hydro_CS"/>
</dbReference>
<dbReference type="InterPro" id="IPR036416">
    <property type="entry name" value="Pept_tRNA_hydro_sf"/>
</dbReference>
<dbReference type="NCBIfam" id="TIGR00447">
    <property type="entry name" value="pth"/>
    <property type="match status" value="1"/>
</dbReference>
<dbReference type="PANTHER" id="PTHR17224">
    <property type="entry name" value="PEPTIDYL-TRNA HYDROLASE"/>
    <property type="match status" value="1"/>
</dbReference>
<dbReference type="PANTHER" id="PTHR17224:SF1">
    <property type="entry name" value="PEPTIDYL-TRNA HYDROLASE"/>
    <property type="match status" value="1"/>
</dbReference>
<dbReference type="Pfam" id="PF01195">
    <property type="entry name" value="Pept_tRNA_hydro"/>
    <property type="match status" value="1"/>
</dbReference>
<dbReference type="SUPFAM" id="SSF53178">
    <property type="entry name" value="Peptidyl-tRNA hydrolase-like"/>
    <property type="match status" value="1"/>
</dbReference>
<dbReference type="PROSITE" id="PS01195">
    <property type="entry name" value="PEPT_TRNA_HYDROL_1"/>
    <property type="match status" value="1"/>
</dbReference>
<dbReference type="PROSITE" id="PS01196">
    <property type="entry name" value="PEPT_TRNA_HYDROL_2"/>
    <property type="match status" value="1"/>
</dbReference>
<accession>Q5YPZ6</accession>
<proteinExistence type="inferred from homology"/>
<keyword id="KW-0963">Cytoplasm</keyword>
<keyword id="KW-0378">Hydrolase</keyword>
<keyword id="KW-1185">Reference proteome</keyword>
<keyword id="KW-0694">RNA-binding</keyword>
<keyword id="KW-0820">tRNA-binding</keyword>
<gene>
    <name evidence="1" type="primary">pth</name>
    <name type="ordered locus">NFA_48930</name>
</gene>
<name>PTH_NOCFA</name>
<evidence type="ECO:0000255" key="1">
    <source>
        <dbReference type="HAMAP-Rule" id="MF_00083"/>
    </source>
</evidence>
<comment type="function">
    <text evidence="1">Hydrolyzes ribosome-free peptidyl-tRNAs (with 1 or more amino acids incorporated), which drop off the ribosome during protein synthesis, or as a result of ribosome stalling.</text>
</comment>
<comment type="function">
    <text evidence="1">Catalyzes the release of premature peptidyl moieties from peptidyl-tRNA molecules trapped in stalled 50S ribosomal subunits, and thus maintains levels of free tRNAs and 50S ribosomes.</text>
</comment>
<comment type="catalytic activity">
    <reaction evidence="1">
        <text>an N-acyl-L-alpha-aminoacyl-tRNA + H2O = an N-acyl-L-amino acid + a tRNA + H(+)</text>
        <dbReference type="Rhea" id="RHEA:54448"/>
        <dbReference type="Rhea" id="RHEA-COMP:10123"/>
        <dbReference type="Rhea" id="RHEA-COMP:13883"/>
        <dbReference type="ChEBI" id="CHEBI:15377"/>
        <dbReference type="ChEBI" id="CHEBI:15378"/>
        <dbReference type="ChEBI" id="CHEBI:59874"/>
        <dbReference type="ChEBI" id="CHEBI:78442"/>
        <dbReference type="ChEBI" id="CHEBI:138191"/>
        <dbReference type="EC" id="3.1.1.29"/>
    </reaction>
</comment>
<comment type="subunit">
    <text evidence="1">Monomer.</text>
</comment>
<comment type="subcellular location">
    <subcellularLocation>
        <location evidence="1">Cytoplasm</location>
    </subcellularLocation>
</comment>
<comment type="similarity">
    <text evidence="1">Belongs to the PTH family.</text>
</comment>
<reference key="1">
    <citation type="journal article" date="2004" name="Proc. Natl. Acad. Sci. U.S.A.">
        <title>The complete genomic sequence of Nocardia farcinica IFM 10152.</title>
        <authorList>
            <person name="Ishikawa J."/>
            <person name="Yamashita A."/>
            <person name="Mikami Y."/>
            <person name="Hoshino Y."/>
            <person name="Kurita H."/>
            <person name="Hotta K."/>
            <person name="Shiba T."/>
            <person name="Hattori M."/>
        </authorList>
    </citation>
    <scope>NUCLEOTIDE SEQUENCE [LARGE SCALE GENOMIC DNA]</scope>
    <source>
        <strain>IFM 10152</strain>
    </source>
</reference>